<keyword id="KW-0002">3D-structure</keyword>
<keyword id="KW-1204">Blood coagulation cascade activating toxin</keyword>
<keyword id="KW-0106">Calcium</keyword>
<keyword id="KW-0903">Direct protein sequencing</keyword>
<keyword id="KW-1015">Disulfide bond</keyword>
<keyword id="KW-0325">Glycoprotein</keyword>
<keyword id="KW-1199">Hemostasis impairing toxin</keyword>
<keyword id="KW-0479">Metal-binding</keyword>
<keyword id="KW-0582">Pharmaceutical</keyword>
<keyword id="KW-0655">Prothrombin activator</keyword>
<keyword id="KW-1185">Reference proteome</keyword>
<keyword id="KW-0677">Repeat</keyword>
<keyword id="KW-0964">Secreted</keyword>
<keyword id="KW-0732">Signal</keyword>
<keyword id="KW-0800">Toxin</keyword>
<organism>
    <name type="scientific">Pseudonaja textilis</name>
    <name type="common">Eastern brown snake</name>
    <dbReference type="NCBI Taxonomy" id="8673"/>
    <lineage>
        <taxon>Eukaryota</taxon>
        <taxon>Metazoa</taxon>
        <taxon>Chordata</taxon>
        <taxon>Craniata</taxon>
        <taxon>Vertebrata</taxon>
        <taxon>Euteleostomi</taxon>
        <taxon>Lepidosauria</taxon>
        <taxon>Squamata</taxon>
        <taxon>Bifurcata</taxon>
        <taxon>Unidentata</taxon>
        <taxon>Episquamata</taxon>
        <taxon>Toxicofera</taxon>
        <taxon>Serpentes</taxon>
        <taxon>Colubroidea</taxon>
        <taxon>Elapidae</taxon>
        <taxon>Hydrophiinae</taxon>
        <taxon>Pseudonaja</taxon>
    </lineage>
</organism>
<reference key="1">
    <citation type="journal article" date="2003" name="Blood">
        <title>The nonenzymatic subunit of pseutarin C, a prothrombin activator from eastern brown snake (Pseudonaja textilis) venom, shows structural similarity to mammalian coagulation factor V.</title>
        <authorList>
            <person name="Rao V.S."/>
            <person name="Swarup S."/>
            <person name="Kini R.M."/>
        </authorList>
    </citation>
    <scope>NUCLEOTIDE SEQUENCE [MRNA]</scope>
    <scope>PROTEIN SEQUENCE OF 31-54; 58-124; 141-160; 309-317; 331-340; 352-372; 378-392; 430-454; 477-499; 507-530; 559-567; 821-840; 851-866; 868-886; 896-922; 926-949; 968-996; 1037-1059; 1078-1089; 1119-1134; 1149-1175; 1266-1279; 1327-1368; 1396-1405; 1413-1425; 1429-1435 AND 1443-1451</scope>
    <scope>LACK OF GLYCOSYLATION AT ASN-385 AND ASN-1397</scope>
    <scope>SUBCELLULAR LOCATION</scope>
    <scope>IDENTIFICATION BY MASS SPECTROMETRY</scope>
    <source>
        <tissue>Venom</tissue>
        <tissue>Venom gland</tissue>
    </source>
</reference>
<reference key="2">
    <citation type="journal article" date="2002" name="Thromb. Haemost.">
        <title>Pseutarin C, a prothrombin activator from Pseudonaja textilis venom: its structural and functional similarity to mammalian coagulation factor Xa-Va complex.</title>
        <authorList>
            <person name="Rao V.S."/>
            <person name="Kini R.M."/>
        </authorList>
    </citation>
    <scope>PARTIAL PROTEIN SEQUENCE</scope>
    <scope>FUNCTION</scope>
    <scope>SUBUNIT</scope>
    <scope>SUBCELLULAR LOCATION</scope>
    <source>
        <tissue>Venom</tissue>
    </source>
</reference>
<reference key="3">
    <citation type="journal article" date="2006" name="Mol. Cell. Proteomics">
        <title>Molecular diversity in venom from the Australian Brown snake, Pseudonaja textilis.</title>
        <authorList>
            <person name="Birrell G.W."/>
            <person name="Earl S."/>
            <person name="Masci P.P."/>
            <person name="de Jersey J."/>
            <person name="Wallis T.P."/>
            <person name="Gorman J.J."/>
            <person name="Lavin M.F."/>
        </authorList>
    </citation>
    <scope>PROTEIN SEQUENCE OF 852-861</scope>
    <scope>IDENTIFICATION BY MASS SPECTROMETRY</scope>
    <source>
        <tissue>Venom</tissue>
    </source>
</reference>
<reference key="4">
    <citation type="journal article" date="2001" name="Thromb. Haemost.">
        <title>Classification and nomenclature of prothrombin activators isolated from snake venoms.</title>
        <authorList>
            <person name="Manjunatha Kini R."/>
            <person name="Morita T."/>
            <person name="Rosing J."/>
        </authorList>
    </citation>
    <scope>NOMENCLATURE</scope>
</reference>
<reference key="5">
    <citation type="journal article" date="2005" name="Thromb. Haemost.">
        <title>Gene duplication of coagulation factor V and origin of venom prothrombin activator in Pseudonaja textilis snake.</title>
        <authorList>
            <person name="Minh Le T.N."/>
            <person name="Reza M.A."/>
            <person name="Swarup S."/>
            <person name="Kini R.M."/>
        </authorList>
    </citation>
    <scope>TISSUE SPECIFICITY</scope>
    <source>
        <tissue>Venom gland</tissue>
    </source>
</reference>
<reference key="6">
    <citation type="journal article" date="2012" name="Toxicon">
        <title>Drug development from Australian elapid snake venoms and the Venomics pipeline of candidates for haemostasis: Textilinin-1 (Q8008), Haempatch (Q8009) and CoVase (V0801).</title>
        <authorList>
            <person name="Earl S.T."/>
            <person name="Masci P.P."/>
            <person name="de Jersey J."/>
            <person name="Lavin M.F."/>
            <person name="Dixon J."/>
        </authorList>
    </citation>
    <scope>PHARMACEUTICAL</scope>
</reference>
<reference key="7">
    <citation type="journal article" date="2013" name="Blood">
        <title>Crystal structure of the prothrombinase complex from the venom of Pseudonaja textilis.</title>
        <authorList>
            <person name="Lechtenberg B.C."/>
            <person name="Murray-Rust T.A."/>
            <person name="Johnson D.J."/>
            <person name="Adams T.E."/>
            <person name="Krishnaswamy S."/>
            <person name="Camire R.M."/>
            <person name="Huntington J.A."/>
        </authorList>
    </citation>
    <scope>X-RAY CRYSTALLOGRAPHY (3.32 ANGSTROMS) OF 31-1460 IN COMPLEX WITH PSEUTARIN-C CATALYTIC SUBUNIT AND CALCIUM</scope>
    <scope>GLYCOSYLATION AT ASN-156; ASN-242; ASN-406; ASN-944 AND ASN-1180</scope>
    <scope>DISULFIDE BOND</scope>
    <scope>FUNCTION</scope>
    <source>
        <tissue>Venom</tissue>
    </source>
</reference>
<sequence length="1460" mass="165932">MGRYSVSPVPKCLLLMFLGWSGLKYYQVNAAQLREYHIAAQLEDWDYNPQPEELSRLSESDLTFKKIVYREYELDFKQEEPRDALSGLLGPTLRGEVGDSLIIYFKNFATQPVSIHPQSAVYNKWSEGSSYSDGTSDVERLDDAVPPGQSFKYVWNITAEIGPKKADPPCLTYAYYSHVNMVRDFNSGLIGALLICKEGSLNANGSQKFFNREYVLMFSVFDESKNWYRKPSLQYTINGFANGTLPDVQACAYDHISWHLIGMSSSPEIFSVHFNGQTLEQNHYKVSTINLVGGASVTADMSVSRTGKWLISSLVAKHLQAGMYGYLNIKDCGNPDTLTRKLSFRELMKIKNWEYFIAAEEITWDYAPEIPSSVDRRYKAQYLDNFSNFIGKKYKKAVFRQYEDGNFTKPTYAIWPKERGILGPVIKAKVRDTVTIVFKNLASRPYSIYVHGVSVSKDAEGAIYPSDPKENITHGKAVEPGQVYTYKWTVLDTDEPTVKDSECITKLYHSAVDMTRDIASGLIGPLLVCKHKALSVKGVQNKADVEQHAVFAVFDENKSWYLEDNIKKYCSNPSAVKKDDPKFYKSNVMYTLNGYASDRTEVLRFHQSEVVQWHLTSVGTVDEIVPVHLSGHTFLSKGKHQDILNLFPMSGESATVTMDNLGTWLLSSWGSCEMSNGMRLRFLDANYDDEDEGNEEEEEDDGDIFADIFIPSEVVKKKEEVPVNFVPDPESDALAKELGLIDDEGNPIIQPRREQTEDDEEQLMKASMLGLRSFKGSVAEEELKHTALALEEDAHASDPRIDSNSARNPDDIAGRYLRTINRGNKRRYYIAAEEVLWDYSPIGKSQVRSRAAKTTFKKAIFRSYLDDTFQTPSTGGEYEKHLGILGPIIRAEVDDVIEIQFKNLASRPYSLHAHGLLYEKSSEGRSYDDKSPELFKKDDAIMPNGTYTYVWQVPPRSGPTDNTEKCKSWAYYSGVNPEKDIHSGLIGPILICQKGMIDKYNRTIDIREFVLFFMVFDEEKSWYFPKSDKSTCEEKLIGVQSLHTFPAINGIPYQLQGLTMYKDENVHWHLLNMGGPKDIHVVNFHGQTFTEEGREDNQLGVLPLLPGTFASIKMKPSKIGTWLLETEVGENQERGMQALFTVIDKDCKLPMGLASGIIQDSQISASGHVGYWEPKLARLNNTGKYNAWSIIKKEHEHPWIQIDLQRQVVITGIQTQGTVQLLQHSYTVEYFVTYSEDGQNWITFKGRHSETQMHFEGNSDGTTVKENHIDPPIIARYIRLHPTKFYNRPTFRIELLGCEVEGCSVPLGMESGAIKNSEITASSYKKTWWSSWEPSLARLNLEGGTNAWQPEVNNKDQWLQIDLQHLTKITSIITQGATSMTTSMYVKTFSIHYTDDNSTWKPYLDVRTSMEKVFTGNINSDGHVKHFFKPPILSRFIRIIPKTWNQYIALRIELFGCEVF</sequence>
<protein>
    <recommendedName>
        <fullName>Venom prothrombin activator pseutarin-C non-catalytic subunit</fullName>
        <shortName>PCNS</shortName>
        <shortName>vPA</shortName>
    </recommendedName>
    <alternativeName>
        <fullName>Venom coagulation factor Va-like protein</fullName>
    </alternativeName>
    <component>
        <recommendedName>
            <fullName>Pseutarin-C non-catalytic subunit heavy chain</fullName>
        </recommendedName>
    </component>
    <component>
        <recommendedName>
            <fullName>Pseutarin-C non-catalytic subunit light chain</fullName>
        </recommendedName>
    </component>
</protein>
<accession>Q7SZN0</accession>
<comment type="function">
    <text evidence="4 7">Snake prothrombin activator that attacks the hemostatic system of prey. This non-catalytic subunit is functionally similar to blood coagulation factor V (PubMed:12362232, PubMed:23869089). It serves as a critical cofactor for the prothrombinase activity of the catalytic subunit, which is similar to the blood coagulation factor X (PubMed:12362232, PubMed:23869089). The complex converts prothrombin to thrombin by sequential cleavage at two positions, Arg-320 followed by Arg-271 (PubMed:23869089). Cleavage at Arg-320 produces an active intermediate known as meizothrombin (PubMed:23869089). Meizothrombin is the 'second' substrate for prothrombinase, and it docks in an altered manner to present the second cleavage site (271) (PubMed:23869089). Cleavage at Arg-271 releases active thrombin from its pro-fragment (PubMed:23869089). This order of events is reversed if the protease component of prothrombinase is used on its own, suggesting that the 271 site is inherently more accessible to proteolysis (PubMed:23869089). The complex converts prothrombin to thrombin in presence but also in the absence of membrane (PubMed:23869089).</text>
</comment>
<comment type="subunit">
    <text evidence="1 4">Heterodimer of a light and a heavy chains; non-disulfide-linked. The interaction between the two chains is calcium-dependent (By similarity). Found in its active form associated with pseutarin-C catalytic subunit (AC Q56VR3).</text>
</comment>
<comment type="subcellular location">
    <subcellularLocation>
        <location evidence="4 5">Secreted</location>
    </subcellularLocation>
</comment>
<comment type="tissue specificity">
    <text evidence="6">Expressed by the venom gland.</text>
</comment>
<comment type="PTM">
    <text>In physiological conditions, blood coagulation factor V and factor Va are inactivated by activated protein C (APC) through proteolytic degradation of the heavy chain. However, pseutarin-C non-catalytic subunit (factor V-like protein) retains its full activity even at high concentration of APC. This has two explanations: this protein has only one of the three cleavage sites present in factor V that are targeted by the APC for inactivation, and the binding with the catalytic subunit protect the cleavage site from inactivation.</text>
</comment>
<comment type="pharmaceutical">
    <text evidence="9">Is under preclinical trial by the Australian biopharmaceutical company QRxPharma Ltd, its subsidiary Venomics Pty Ltd (VPL) and the University of Queensland (UQ) under the name CoVase (V0801). Tested as a procoagulant cofactor that may have application as a systemic anti-bleeding agent in the treatment of internal bleeding and non-compressible hemorrhage.</text>
</comment>
<comment type="miscellaneous">
    <text>In contrast to blood coagulation factors that circulate as inactive zymogen in plasma, venom prothrombin activators are always found in the active form in the venom. Hence, catalytic and non-catalytic subunits are found naturally in venom as stable complexes.</text>
</comment>
<comment type="similarity">
    <text evidence="8">Belongs to the multicopper oxidase family.</text>
</comment>
<proteinExistence type="evidence at protein level"/>
<name>FA5V_PSETE</name>
<feature type="signal peptide" evidence="5">
    <location>
        <begin position="1"/>
        <end position="30"/>
    </location>
</feature>
<feature type="chain" id="PRO_5000089286" description="Pseutarin-C non-catalytic subunit heavy chain" evidence="8">
    <location>
        <begin position="31"/>
        <end position="772"/>
    </location>
</feature>
<feature type="propeptide" id="PRO_0000408521" description="Activation peptide (connecting region)">
    <location>
        <begin position="773"/>
        <end position="818"/>
    </location>
</feature>
<feature type="chain" id="PRO_0000408522" description="Pseutarin-C non-catalytic subunit light chain">
    <location>
        <begin position="819"/>
        <end position="1460"/>
    </location>
</feature>
<feature type="domain" description="F5/8 type A 1">
    <location>
        <begin position="32"/>
        <end position="330"/>
    </location>
</feature>
<feature type="domain" description="Plastocyanin-like 1">
    <location>
        <begin position="32"/>
        <end position="196"/>
    </location>
</feature>
<feature type="domain" description="Plastocyanin-like 2">
    <location>
        <begin position="206"/>
        <end position="330"/>
    </location>
</feature>
<feature type="domain" description="F5/8 type A 2">
    <location>
        <begin position="351"/>
        <end position="685"/>
    </location>
</feature>
<feature type="domain" description="Plastocyanin-like 3">
    <location>
        <begin position="351"/>
        <end position="529"/>
    </location>
</feature>
<feature type="domain" description="Plastocyanin-like 4">
    <location>
        <begin position="539"/>
        <end position="685"/>
    </location>
</feature>
<feature type="domain" description="F5/8 type A 3">
    <location>
        <begin position="824"/>
        <end position="1143"/>
    </location>
</feature>
<feature type="domain" description="Plastocyanin-like 5">
    <location>
        <begin position="824"/>
        <end position="992"/>
    </location>
</feature>
<feature type="domain" description="Plastocyanin-like 6">
    <location>
        <begin position="1001"/>
        <end position="1143"/>
    </location>
</feature>
<feature type="domain" description="F5/8 type C 1" evidence="3">
    <location>
        <begin position="1147"/>
        <end position="1298"/>
    </location>
</feature>
<feature type="domain" description="F5/8 type C 2" evidence="3">
    <location>
        <begin position="1303"/>
        <end position="1457"/>
    </location>
</feature>
<feature type="region of interest" description="B">
    <location>
        <begin position="693"/>
        <end position="818"/>
    </location>
</feature>
<feature type="binding site" evidence="10">
    <location>
        <position position="124"/>
    </location>
    <ligand>
        <name>Ca(2+)</name>
        <dbReference type="ChEBI" id="CHEBI:29108"/>
        <label>1</label>
    </ligand>
</feature>
<feature type="binding site" evidence="10">
    <location>
        <position position="139"/>
    </location>
    <ligand>
        <name>Ca(2+)</name>
        <dbReference type="ChEBI" id="CHEBI:29108"/>
        <label>1</label>
    </ligand>
</feature>
<feature type="binding site" evidence="10">
    <location>
        <position position="142"/>
    </location>
    <ligand>
        <name>Ca(2+)</name>
        <dbReference type="ChEBI" id="CHEBI:29108"/>
        <label>1</label>
    </ligand>
</feature>
<feature type="binding site" evidence="10">
    <location>
        <position position="143"/>
    </location>
    <ligand>
        <name>Ca(2+)</name>
        <dbReference type="ChEBI" id="CHEBI:29108"/>
        <label>1</label>
    </ligand>
</feature>
<feature type="binding site" evidence="10">
    <location>
        <position position="920"/>
    </location>
    <ligand>
        <name>Ca(2+)</name>
        <dbReference type="ChEBI" id="CHEBI:29108"/>
        <label>2</label>
    </ligand>
</feature>
<feature type="binding site" evidence="10">
    <location>
        <position position="935"/>
    </location>
    <ligand>
        <name>Ca(2+)</name>
        <dbReference type="ChEBI" id="CHEBI:29108"/>
        <label>2</label>
    </ligand>
</feature>
<feature type="binding site" evidence="10">
    <location>
        <position position="938"/>
    </location>
    <ligand>
        <name>Ca(2+)</name>
        <dbReference type="ChEBI" id="CHEBI:29108"/>
        <label>2</label>
    </ligand>
</feature>
<feature type="binding site" evidence="10">
    <location>
        <position position="939"/>
    </location>
    <ligand>
        <name>Ca(2+)</name>
        <dbReference type="ChEBI" id="CHEBI:29108"/>
        <label>2</label>
    </ligand>
</feature>
<feature type="site" description="Not glycosylated" evidence="5">
    <location>
        <position position="385"/>
    </location>
</feature>
<feature type="site" description="Cleavage; by thrombin" evidence="1">
    <location>
        <begin position="772"/>
        <end position="773"/>
    </location>
</feature>
<feature type="site" description="Cleavage; by thrombin" evidence="1">
    <location>
        <begin position="818"/>
        <end position="819"/>
    </location>
</feature>
<feature type="site" description="Not glycosylated" evidence="5">
    <location>
        <position position="1397"/>
    </location>
</feature>
<feature type="glycosylation site" description="N-linked (GlcNAc...) asparagine" evidence="7 10">
    <location>
        <position position="156"/>
    </location>
</feature>
<feature type="glycosylation site" description="N-linked (GlcNAc...) asparagine" evidence="2">
    <location>
        <position position="204"/>
    </location>
</feature>
<feature type="glycosylation site" description="N-linked (GlcNAc...) asparagine" evidence="7 10">
    <location>
        <position position="242"/>
    </location>
</feature>
<feature type="glycosylation site" description="N-linked (GlcNAc...) asparagine" evidence="7 10">
    <location>
        <position position="406"/>
    </location>
</feature>
<feature type="glycosylation site" description="N-linked (GlcNAc...) asparagine" evidence="2">
    <location>
        <position position="471"/>
    </location>
</feature>
<feature type="glycosylation site" description="N-linked (GlcNAc...) asparagine" evidence="2">
    <location>
        <position position="557"/>
    </location>
</feature>
<feature type="glycosylation site" description="N-linked (GlcNAc...) asparagine" evidence="7 10">
    <location>
        <position position="944"/>
    </location>
</feature>
<feature type="glycosylation site" description="N-linked (GlcNAc...) asparagine" evidence="2">
    <location>
        <position position="1001"/>
    </location>
</feature>
<feature type="glycosylation site" description="N-linked (GlcNAc...) asparagine" evidence="7 10">
    <location>
        <position position="1180"/>
    </location>
</feature>
<feature type="disulfide bond" evidence="7 10">
    <location>
        <begin position="170"/>
        <end position="196"/>
    </location>
</feature>
<feature type="disulfide bond" evidence="7 10">
    <location>
        <begin position="251"/>
        <end position="332"/>
    </location>
</feature>
<feature type="disulfide bond" evidence="7 10">
    <location>
        <begin position="503"/>
        <end position="529"/>
    </location>
</feature>
<feature type="disulfide bond" evidence="7 10">
    <location>
        <begin position="672"/>
        <end position="1032"/>
    </location>
</feature>
<feature type="disulfide bond" evidence="7 10">
    <location>
        <begin position="966"/>
        <end position="992"/>
    </location>
</feature>
<feature type="disulfide bond" evidence="7 10">
    <location>
        <begin position="1147"/>
        <end position="1298"/>
    </location>
</feature>
<feature type="disulfide bond" evidence="7 10">
    <location>
        <begin position="1303"/>
        <end position="1457"/>
    </location>
</feature>
<feature type="sequence conflict" description="In Ref. 1; AA sequence." evidence="8" ref="1">
    <original>EPR</original>
    <variation>KPQ</variation>
    <location>
        <begin position="80"/>
        <end position="82"/>
    </location>
</feature>
<feature type="sequence conflict" description="In Ref. 1; AA sequence." evidence="8" ref="1">
    <original>I</original>
    <variation>Q</variation>
    <location>
        <position position="103"/>
    </location>
</feature>
<feature type="sequence conflict" description="In Ref. 1; AA sequence." evidence="8" ref="1">
    <original>SAVYNK</original>
    <variation>DAVKIG</variation>
    <location>
        <begin position="119"/>
        <end position="124"/>
    </location>
</feature>
<feature type="sequence conflict" description="In Ref. 1; AA sequence." evidence="8" ref="1">
    <original>P</original>
    <variation>A</variation>
    <location>
        <position position="146"/>
    </location>
</feature>
<feature type="sequence conflict" description="In Ref. 1; AA sequence." evidence="8" ref="1">
    <original>N</original>
    <variation>E</variation>
    <location>
        <position position="156"/>
    </location>
</feature>
<feature type="sequence conflict" description="In Ref. 1; AA sequence." evidence="8" ref="1">
    <original>IKNWEYFIAAEEIT</original>
    <variation>AQLWEYHIAAQKED</variation>
    <location>
        <begin position="350"/>
        <end position="363"/>
    </location>
</feature>
<feature type="sequence conflict" description="In Ref. 1; AA sequence." evidence="8" ref="1">
    <original>NLASR</original>
    <variation>DLAVQ</variation>
    <location>
        <begin position="440"/>
        <end position="444"/>
    </location>
</feature>
<feature type="sequence conflict" description="In Ref. 1; AA sequence." evidence="8" ref="1">
    <original>LI</original>
    <variation>IL</variation>
    <location>
        <begin position="522"/>
        <end position="523"/>
    </location>
</feature>
<feature type="sequence conflict" description="In Ref. 1; AA sequence." evidence="8" ref="1">
    <original>INRGNKRR</original>
    <variation>QNTGNKLY</variation>
    <location>
        <begin position="820"/>
        <end position="827"/>
    </location>
</feature>
<feature type="sequence conflict" description="In Ref. 1; AA sequence." evidence="8" ref="1">
    <original>S</original>
    <variation>I</variation>
    <location>
        <position position="840"/>
    </location>
</feature>
<feature type="sequence conflict" description="In Ref. 1; AA sequence." evidence="8" ref="1">
    <original>G</original>
    <variation>GK</variation>
    <location>
        <position position="876"/>
    </location>
</feature>
<feature type="sequence conflict" description="In Ref. 1; AA sequence." evidence="8" ref="1">
    <original>K</original>
    <variation>R</variation>
    <location>
        <position position="902"/>
    </location>
</feature>
<feature type="sequence conflict" description="In Ref. 1; AA sequence." evidence="8" ref="1">
    <original>N</original>
    <variation>F</variation>
    <location>
        <position position="944"/>
    </location>
</feature>
<feature type="sequence conflict" description="In Ref. 1; AA sequence." evidence="8" ref="1">
    <original>IHSGLIGPILICQKG</original>
    <variation>VEPGLIGPLYSIAEEAV</variation>
    <location>
        <begin position="981"/>
        <end position="995"/>
    </location>
</feature>
<feature type="sequence conflict" description="In Ref. 1; AA sequence." evidence="8" ref="1">
    <original>SLH</original>
    <variation>NLG</variation>
    <location>
        <begin position="1041"/>
        <end position="1043"/>
    </location>
</feature>
<feature type="sequence conflict" description="In Ref. 1; AA sequence." evidence="8" ref="1">
    <original>LQGL</original>
    <variation>GK</variation>
    <location>
        <begin position="1055"/>
        <end position="1058"/>
    </location>
</feature>
<feature type="sequence conflict" description="In Ref. 1; AA sequence." evidence="8" ref="1">
    <original>SGHVG</original>
    <variation>AGHVQ</variation>
    <location>
        <begin position="1166"/>
        <end position="1170"/>
    </location>
</feature>
<feature type="sequence conflict" description="In Ref. 1; AA sequence." evidence="8" ref="1">
    <original>I</original>
    <variation>V</variation>
    <location>
        <position position="1274"/>
    </location>
</feature>
<feature type="sequence conflict" description="In Ref. 1; AA sequence." evidence="8" ref="1">
    <original>I</original>
    <variation>K</variation>
    <location>
        <position position="1369"/>
    </location>
</feature>
<feature type="sequence conflict" description="In Ref. 1; AA sequence." evidence="8" ref="1">
    <original>WKPYL</original>
    <variation>YKPYG</variation>
    <location>
        <begin position="1400"/>
        <end position="1404"/>
    </location>
</feature>
<feature type="sequence conflict" description="In Ref. 1; AA sequence." evidence="8" ref="1">
    <original>LS</original>
    <variation>SL</variation>
    <location>
        <begin position="1433"/>
        <end position="1434"/>
    </location>
</feature>
<feature type="strand" evidence="11">
    <location>
        <begin position="33"/>
        <end position="36"/>
    </location>
</feature>
<feature type="strand" evidence="11">
    <location>
        <begin position="39"/>
        <end position="45"/>
    </location>
</feature>
<feature type="strand" evidence="11">
    <location>
        <begin position="64"/>
        <end position="69"/>
    </location>
</feature>
<feature type="helix" evidence="11">
    <location>
        <begin position="74"/>
        <end position="76"/>
    </location>
</feature>
<feature type="strand" evidence="11">
    <location>
        <begin position="84"/>
        <end position="86"/>
    </location>
</feature>
<feature type="strand" evidence="11">
    <location>
        <begin position="100"/>
        <end position="111"/>
    </location>
</feature>
<feature type="strand" evidence="11">
    <location>
        <begin position="117"/>
        <end position="120"/>
    </location>
</feature>
<feature type="turn" evidence="11">
    <location>
        <begin position="124"/>
        <end position="126"/>
    </location>
</feature>
<feature type="turn" evidence="11">
    <location>
        <begin position="137"/>
        <end position="139"/>
    </location>
</feature>
<feature type="turn" evidence="11">
    <location>
        <begin position="141"/>
        <end position="143"/>
    </location>
</feature>
<feature type="strand" evidence="11">
    <location>
        <begin position="150"/>
        <end position="155"/>
    </location>
</feature>
<feature type="strand" evidence="11">
    <location>
        <begin position="159"/>
        <end position="162"/>
    </location>
</feature>
<feature type="turn" evidence="11">
    <location>
        <begin position="164"/>
        <end position="166"/>
    </location>
</feature>
<feature type="strand" evidence="11">
    <location>
        <begin position="169"/>
        <end position="175"/>
    </location>
</feature>
<feature type="turn" evidence="11">
    <location>
        <begin position="178"/>
        <end position="180"/>
    </location>
</feature>
<feature type="helix" evidence="11">
    <location>
        <begin position="181"/>
        <end position="185"/>
    </location>
</feature>
<feature type="turn" evidence="11">
    <location>
        <begin position="186"/>
        <end position="188"/>
    </location>
</feature>
<feature type="strand" evidence="11">
    <location>
        <begin position="191"/>
        <end position="196"/>
    </location>
</feature>
<feature type="strand" evidence="11">
    <location>
        <begin position="205"/>
        <end position="209"/>
    </location>
</feature>
<feature type="strand" evidence="11">
    <location>
        <begin position="211"/>
        <end position="221"/>
    </location>
</feature>
<feature type="turn" evidence="11">
    <location>
        <begin position="223"/>
        <end position="225"/>
    </location>
</feature>
<feature type="strand" evidence="11">
    <location>
        <begin position="226"/>
        <end position="228"/>
    </location>
</feature>
<feature type="strand" evidence="11">
    <location>
        <begin position="234"/>
        <end position="237"/>
    </location>
</feature>
<feature type="strand" evidence="11">
    <location>
        <begin position="248"/>
        <end position="251"/>
    </location>
</feature>
<feature type="strand" evidence="11">
    <location>
        <begin position="256"/>
        <end position="263"/>
    </location>
</feature>
<feature type="strand" evidence="11">
    <location>
        <begin position="272"/>
        <end position="274"/>
    </location>
</feature>
<feature type="strand" evidence="11">
    <location>
        <begin position="287"/>
        <end position="289"/>
    </location>
</feature>
<feature type="strand" evidence="11">
    <location>
        <begin position="295"/>
        <end position="300"/>
    </location>
</feature>
<feature type="strand" evidence="11">
    <location>
        <begin position="307"/>
        <end position="313"/>
    </location>
</feature>
<feature type="helix" evidence="11">
    <location>
        <begin position="316"/>
        <end position="320"/>
    </location>
</feature>
<feature type="strand" evidence="11">
    <location>
        <begin position="325"/>
        <end position="330"/>
    </location>
</feature>
<feature type="strand" evidence="11">
    <location>
        <begin position="355"/>
        <end position="366"/>
    </location>
</feature>
<feature type="helix" evidence="11">
    <location>
        <begin position="378"/>
        <end position="381"/>
    </location>
</feature>
<feature type="strand" evidence="11">
    <location>
        <begin position="392"/>
        <end position="404"/>
    </location>
</feature>
<feature type="strand" evidence="11">
    <location>
        <begin position="409"/>
        <end position="411"/>
    </location>
</feature>
<feature type="strand" evidence="11">
    <location>
        <begin position="413"/>
        <end position="415"/>
    </location>
</feature>
<feature type="strand" evidence="11">
    <location>
        <begin position="417"/>
        <end position="419"/>
    </location>
</feature>
<feature type="strand" evidence="11">
    <location>
        <begin position="426"/>
        <end position="428"/>
    </location>
</feature>
<feature type="strand" evidence="11">
    <location>
        <begin position="433"/>
        <end position="440"/>
    </location>
</feature>
<feature type="strand" evidence="11">
    <location>
        <begin position="442"/>
        <end position="444"/>
    </location>
</feature>
<feature type="strand" evidence="11">
    <location>
        <begin position="449"/>
        <end position="453"/>
    </location>
</feature>
<feature type="strand" evidence="11">
    <location>
        <begin position="475"/>
        <end position="478"/>
    </location>
</feature>
<feature type="strand" evidence="11">
    <location>
        <begin position="483"/>
        <end position="489"/>
    </location>
</feature>
<feature type="turn" evidence="11">
    <location>
        <begin position="492"/>
        <end position="494"/>
    </location>
</feature>
<feature type="strand" evidence="11">
    <location>
        <begin position="498"/>
        <end position="500"/>
    </location>
</feature>
<feature type="strand" evidence="11">
    <location>
        <begin position="502"/>
        <end position="509"/>
    </location>
</feature>
<feature type="helix" evidence="11">
    <location>
        <begin position="514"/>
        <end position="519"/>
    </location>
</feature>
<feature type="strand" evidence="11">
    <location>
        <begin position="524"/>
        <end position="529"/>
    </location>
</feature>
<feature type="helix" evidence="11">
    <location>
        <begin position="556"/>
        <end position="558"/>
    </location>
</feature>
<feature type="helix" evidence="11">
    <location>
        <begin position="562"/>
        <end position="569"/>
    </location>
</feature>
<feature type="helix" evidence="11">
    <location>
        <begin position="573"/>
        <end position="575"/>
    </location>
</feature>
<feature type="helix" evidence="11">
    <location>
        <begin position="581"/>
        <end position="587"/>
    </location>
</feature>
<feature type="strand" evidence="11">
    <location>
        <begin position="595"/>
        <end position="597"/>
    </location>
</feature>
<feature type="strand" evidence="11">
    <location>
        <begin position="603"/>
        <end position="605"/>
    </location>
</feature>
<feature type="strand" evidence="11">
    <location>
        <begin position="610"/>
        <end position="612"/>
    </location>
</feature>
<feature type="strand" evidence="11">
    <location>
        <begin position="630"/>
        <end position="632"/>
    </location>
</feature>
<feature type="strand" evidence="11">
    <location>
        <begin position="634"/>
        <end position="636"/>
    </location>
</feature>
<feature type="strand" evidence="11">
    <location>
        <begin position="639"/>
        <end position="643"/>
    </location>
</feature>
<feature type="strand" evidence="11">
    <location>
        <begin position="655"/>
        <end position="657"/>
    </location>
</feature>
<feature type="strand" evidence="11">
    <location>
        <begin position="664"/>
        <end position="667"/>
    </location>
</feature>
<feature type="helix" evidence="11">
    <location>
        <begin position="674"/>
        <end position="677"/>
    </location>
</feature>
<feature type="strand" evidence="11">
    <location>
        <begin position="678"/>
        <end position="684"/>
    </location>
</feature>
<feature type="helix" evidence="11">
    <location>
        <begin position="692"/>
        <end position="698"/>
    </location>
</feature>
<feature type="strand" evidence="11">
    <location>
        <begin position="834"/>
        <end position="839"/>
    </location>
</feature>
<feature type="strand" evidence="11">
    <location>
        <begin position="855"/>
        <end position="859"/>
    </location>
</feature>
<feature type="strand" evidence="11">
    <location>
        <begin position="863"/>
        <end position="866"/>
    </location>
</feature>
<feature type="strand" evidence="11">
    <location>
        <begin position="870"/>
        <end position="872"/>
    </location>
</feature>
<feature type="helix" evidence="11">
    <location>
        <begin position="878"/>
        <end position="880"/>
    </location>
</feature>
<feature type="strand" evidence="11">
    <location>
        <begin position="889"/>
        <end position="892"/>
    </location>
</feature>
<feature type="strand" evidence="11">
    <location>
        <begin position="896"/>
        <end position="899"/>
    </location>
</feature>
<feature type="strand" evidence="11">
    <location>
        <begin position="905"/>
        <end position="907"/>
    </location>
</feature>
<feature type="strand" evidence="11">
    <location>
        <begin position="912"/>
        <end position="917"/>
    </location>
</feature>
<feature type="helix" evidence="11">
    <location>
        <begin position="933"/>
        <end position="935"/>
    </location>
</feature>
<feature type="turn" evidence="11">
    <location>
        <begin position="936"/>
        <end position="938"/>
    </location>
</feature>
<feature type="strand" evidence="11">
    <location>
        <begin position="949"/>
        <end position="952"/>
    </location>
</feature>
<feature type="helix" evidence="11">
    <location>
        <begin position="955"/>
        <end position="957"/>
    </location>
</feature>
<feature type="strand" evidence="11">
    <location>
        <begin position="966"/>
        <end position="972"/>
    </location>
</feature>
<feature type="strand" evidence="11">
    <location>
        <begin position="974"/>
        <end position="976"/>
    </location>
</feature>
<feature type="helix" evidence="11">
    <location>
        <begin position="977"/>
        <end position="981"/>
    </location>
</feature>
<feature type="turn" evidence="11">
    <location>
        <begin position="982"/>
        <end position="984"/>
    </location>
</feature>
<feature type="strand" evidence="11">
    <location>
        <begin position="987"/>
        <end position="992"/>
    </location>
</feature>
<feature type="strand" evidence="11">
    <location>
        <begin position="999"/>
        <end position="1002"/>
    </location>
</feature>
<feature type="strand" evidence="11">
    <location>
        <begin position="1004"/>
        <end position="1017"/>
    </location>
</feature>
<feature type="turn" evidence="11">
    <location>
        <begin position="1018"/>
        <end position="1020"/>
    </location>
</feature>
<feature type="strand" evidence="11">
    <location>
        <begin position="1021"/>
        <end position="1023"/>
    </location>
</feature>
<feature type="strand" evidence="11">
    <location>
        <begin position="1044"/>
        <end position="1048"/>
    </location>
</feature>
<feature type="strand" evidence="11">
    <location>
        <begin position="1051"/>
        <end position="1053"/>
    </location>
</feature>
<feature type="strand" evidence="11">
    <location>
        <begin position="1059"/>
        <end position="1064"/>
    </location>
</feature>
<feature type="strand" evidence="11">
    <location>
        <begin position="1066"/>
        <end position="1072"/>
    </location>
</feature>
<feature type="strand" evidence="11">
    <location>
        <begin position="1080"/>
        <end position="1084"/>
    </location>
</feature>
<feature type="strand" evidence="11">
    <location>
        <begin position="1100"/>
        <end position="1104"/>
    </location>
</feature>
<feature type="strand" evidence="11">
    <location>
        <begin position="1111"/>
        <end position="1113"/>
    </location>
</feature>
<feature type="strand" evidence="11">
    <location>
        <begin position="1120"/>
        <end position="1127"/>
    </location>
</feature>
<feature type="helix" evidence="11">
    <location>
        <begin position="1129"/>
        <end position="1132"/>
    </location>
</feature>
<feature type="strand" evidence="11">
    <location>
        <begin position="1139"/>
        <end position="1143"/>
    </location>
</feature>
<feature type="strand" evidence="11">
    <location>
        <begin position="1152"/>
        <end position="1155"/>
    </location>
</feature>
<feature type="turn" evidence="11">
    <location>
        <begin position="1160"/>
        <end position="1162"/>
    </location>
</feature>
<feature type="strand" evidence="11">
    <location>
        <begin position="1163"/>
        <end position="1166"/>
    </location>
</feature>
<feature type="strand" evidence="11">
    <location>
        <begin position="1169"/>
        <end position="1171"/>
    </location>
</feature>
<feature type="strand" evidence="11">
    <location>
        <begin position="1183"/>
        <end position="1185"/>
    </location>
</feature>
<feature type="strand" evidence="11">
    <location>
        <begin position="1200"/>
        <end position="1215"/>
    </location>
</feature>
<feature type="strand" evidence="11">
    <location>
        <begin position="1226"/>
        <end position="1232"/>
    </location>
</feature>
<feature type="strand" evidence="11">
    <location>
        <begin position="1235"/>
        <end position="1237"/>
    </location>
</feature>
<feature type="strand" evidence="11">
    <location>
        <begin position="1254"/>
        <end position="1256"/>
    </location>
</feature>
<feature type="strand" evidence="11">
    <location>
        <begin position="1259"/>
        <end position="1262"/>
    </location>
</feature>
<feature type="strand" evidence="11">
    <location>
        <begin position="1265"/>
        <end position="1267"/>
    </location>
</feature>
<feature type="strand" evidence="11">
    <location>
        <begin position="1273"/>
        <end position="1288"/>
    </location>
</feature>
<feature type="strand" evidence="11">
    <location>
        <begin position="1293"/>
        <end position="1298"/>
    </location>
</feature>
<feature type="turn" evidence="11">
    <location>
        <begin position="1309"/>
        <end position="1311"/>
    </location>
</feature>
<feature type="turn" evidence="11">
    <location>
        <begin position="1316"/>
        <end position="1318"/>
    </location>
</feature>
<feature type="strand" evidence="11">
    <location>
        <begin position="1319"/>
        <end position="1322"/>
    </location>
</feature>
<feature type="strand" evidence="11">
    <location>
        <begin position="1343"/>
        <end position="1345"/>
    </location>
</feature>
<feature type="strand" evidence="11">
    <location>
        <begin position="1359"/>
        <end position="1362"/>
    </location>
</feature>
<feature type="strand" evidence="11">
    <location>
        <begin position="1368"/>
        <end position="1374"/>
    </location>
</feature>
<feature type="strand" evidence="11">
    <location>
        <begin position="1376"/>
        <end position="1378"/>
    </location>
</feature>
<feature type="strand" evidence="11">
    <location>
        <begin position="1383"/>
        <end position="1389"/>
    </location>
</feature>
<feature type="strand" evidence="11">
    <location>
        <begin position="1392"/>
        <end position="1394"/>
    </location>
</feature>
<feature type="strand" evidence="11">
    <location>
        <begin position="1396"/>
        <end position="1398"/>
    </location>
</feature>
<feature type="strand" evidence="11">
    <location>
        <begin position="1400"/>
        <end position="1402"/>
    </location>
</feature>
<feature type="strand" evidence="11">
    <location>
        <begin position="1408"/>
        <end position="1410"/>
    </location>
</feature>
<feature type="strand" evidence="11">
    <location>
        <begin position="1418"/>
        <end position="1421"/>
    </location>
</feature>
<feature type="strand" evidence="11">
    <location>
        <begin position="1426"/>
        <end position="1432"/>
    </location>
</feature>
<feature type="strand" evidence="11">
    <location>
        <begin position="1435"/>
        <end position="1438"/>
    </location>
</feature>
<feature type="strand" evidence="11">
    <location>
        <begin position="1441"/>
        <end position="1447"/>
    </location>
</feature>
<feature type="strand" evidence="11">
    <location>
        <begin position="1452"/>
        <end position="1457"/>
    </location>
</feature>
<evidence type="ECO:0000250" key="1"/>
<evidence type="ECO:0000255" key="2"/>
<evidence type="ECO:0000255" key="3">
    <source>
        <dbReference type="PROSITE-ProRule" id="PRU00081"/>
    </source>
</evidence>
<evidence type="ECO:0000269" key="4">
    <source>
    </source>
</evidence>
<evidence type="ECO:0000269" key="5">
    <source>
    </source>
</evidence>
<evidence type="ECO:0000269" key="6">
    <source>
    </source>
</evidence>
<evidence type="ECO:0000269" key="7">
    <source>
    </source>
</evidence>
<evidence type="ECO:0000305" key="8"/>
<evidence type="ECO:0000305" key="9">
    <source>
    </source>
</evidence>
<evidence type="ECO:0000312" key="10">
    <source>
        <dbReference type="PDB" id="4BXS"/>
    </source>
</evidence>
<evidence type="ECO:0007829" key="11">
    <source>
        <dbReference type="PDB" id="4BXS"/>
    </source>
</evidence>
<dbReference type="EMBL" id="AY168281">
    <property type="protein sequence ID" value="AAO38805.1"/>
    <property type="molecule type" value="mRNA"/>
</dbReference>
<dbReference type="PDB" id="4BXS">
    <property type="method" value="X-ray"/>
    <property type="resolution" value="3.32 A"/>
    <property type="chains" value="V=31-1460"/>
</dbReference>
<dbReference type="PDBsum" id="4BXS"/>
<dbReference type="SMR" id="Q7SZN0"/>
<dbReference type="iPTMnet" id="Q7SZN0"/>
<dbReference type="OrthoDB" id="6502960at2759"/>
<dbReference type="EvolutionaryTrace" id="Q7SZN0"/>
<dbReference type="Proteomes" id="UP000472273">
    <property type="component" value="Unplaced"/>
</dbReference>
<dbReference type="GO" id="GO:0005576">
    <property type="term" value="C:extracellular region"/>
    <property type="evidence" value="ECO:0000314"/>
    <property type="project" value="UniProtKB"/>
</dbReference>
<dbReference type="GO" id="GO:0005886">
    <property type="term" value="C:plasma membrane"/>
    <property type="evidence" value="ECO:0007669"/>
    <property type="project" value="TreeGrafter"/>
</dbReference>
<dbReference type="GO" id="GO:0032991">
    <property type="term" value="C:protein-containing complex"/>
    <property type="evidence" value="ECO:0000314"/>
    <property type="project" value="UniProtKB"/>
</dbReference>
<dbReference type="GO" id="GO:0005507">
    <property type="term" value="F:copper ion binding"/>
    <property type="evidence" value="ECO:0007669"/>
    <property type="project" value="InterPro"/>
</dbReference>
<dbReference type="GO" id="GO:0016504">
    <property type="term" value="F:peptidase activator activity"/>
    <property type="evidence" value="ECO:0007669"/>
    <property type="project" value="UniProtKB-KW"/>
</dbReference>
<dbReference type="GO" id="GO:0038023">
    <property type="term" value="F:signaling receptor activity"/>
    <property type="evidence" value="ECO:0007669"/>
    <property type="project" value="TreeGrafter"/>
</dbReference>
<dbReference type="GO" id="GO:0090729">
    <property type="term" value="F:toxin activity"/>
    <property type="evidence" value="ECO:0007669"/>
    <property type="project" value="UniProtKB-KW"/>
</dbReference>
<dbReference type="GO" id="GO:0044469">
    <property type="term" value="P:venom-mediated blood coagulation"/>
    <property type="evidence" value="ECO:0000314"/>
    <property type="project" value="UniProtKB"/>
</dbReference>
<dbReference type="CDD" id="cd04226">
    <property type="entry name" value="CuRO_1_FV_like"/>
    <property type="match status" value="1"/>
</dbReference>
<dbReference type="CDD" id="cd14453">
    <property type="entry name" value="CuRO_2_FV_like"/>
    <property type="match status" value="1"/>
</dbReference>
<dbReference type="CDD" id="cd14450">
    <property type="entry name" value="CuRO_3_FV_like"/>
    <property type="match status" value="1"/>
</dbReference>
<dbReference type="CDD" id="cd14454">
    <property type="entry name" value="CuRO_4_FV_like"/>
    <property type="match status" value="1"/>
</dbReference>
<dbReference type="CDD" id="cd14451">
    <property type="entry name" value="CuRO_5_FV_like"/>
    <property type="match status" value="1"/>
</dbReference>
<dbReference type="CDD" id="cd00057">
    <property type="entry name" value="FA58C"/>
    <property type="match status" value="2"/>
</dbReference>
<dbReference type="FunFam" id="2.60.40.420:FF:000056">
    <property type="entry name" value="Coagulation factor V"/>
    <property type="match status" value="1"/>
</dbReference>
<dbReference type="FunFam" id="2.60.40.420:FF:000050">
    <property type="entry name" value="coagulation factor V isoform X1"/>
    <property type="match status" value="1"/>
</dbReference>
<dbReference type="FunFam" id="2.60.40.420:FF:000068">
    <property type="entry name" value="coagulation factor V isoform X1"/>
    <property type="match status" value="1"/>
</dbReference>
<dbReference type="FunFam" id="2.60.120.260:FF:000002">
    <property type="entry name" value="Coagulation factor VIII"/>
    <property type="match status" value="2"/>
</dbReference>
<dbReference type="FunFam" id="2.60.40.420:FF:000011">
    <property type="entry name" value="Coagulation factor VIII (Predicted)"/>
    <property type="match status" value="2"/>
</dbReference>
<dbReference type="Gene3D" id="2.60.40.420">
    <property type="entry name" value="Cupredoxins - blue copper proteins"/>
    <property type="match status" value="5"/>
</dbReference>
<dbReference type="Gene3D" id="2.60.120.260">
    <property type="entry name" value="Galactose-binding domain-like"/>
    <property type="match status" value="2"/>
</dbReference>
<dbReference type="InterPro" id="IPR011707">
    <property type="entry name" value="Cu-oxidase-like_N"/>
</dbReference>
<dbReference type="InterPro" id="IPR033138">
    <property type="entry name" value="Cu_oxidase_CS"/>
</dbReference>
<dbReference type="InterPro" id="IPR008972">
    <property type="entry name" value="Cupredoxin"/>
</dbReference>
<dbReference type="InterPro" id="IPR000421">
    <property type="entry name" value="FA58C"/>
</dbReference>
<dbReference type="InterPro" id="IPR024715">
    <property type="entry name" value="Factor_5/8-like"/>
</dbReference>
<dbReference type="InterPro" id="IPR008979">
    <property type="entry name" value="Galactose-bd-like_sf"/>
</dbReference>
<dbReference type="InterPro" id="IPR050633">
    <property type="entry name" value="Neuropilin_MCO_CoagFactor"/>
</dbReference>
<dbReference type="PANTHER" id="PTHR46806:SF10">
    <property type="entry name" value="COAGULATION FACTOR V"/>
    <property type="match status" value="1"/>
</dbReference>
<dbReference type="PANTHER" id="PTHR46806">
    <property type="entry name" value="F5/8 TYPE C DOMAIN-CONTAINING PROTEIN"/>
    <property type="match status" value="1"/>
</dbReference>
<dbReference type="Pfam" id="PF07732">
    <property type="entry name" value="Cu-oxidase_3"/>
    <property type="match status" value="3"/>
</dbReference>
<dbReference type="Pfam" id="PF00754">
    <property type="entry name" value="F5_F8_type_C"/>
    <property type="match status" value="2"/>
</dbReference>
<dbReference type="PIRSF" id="PIRSF000354">
    <property type="entry name" value="Factors_V_VIII"/>
    <property type="match status" value="1"/>
</dbReference>
<dbReference type="SMART" id="SM00231">
    <property type="entry name" value="FA58C"/>
    <property type="match status" value="2"/>
</dbReference>
<dbReference type="SUPFAM" id="SSF49503">
    <property type="entry name" value="Cupredoxins"/>
    <property type="match status" value="6"/>
</dbReference>
<dbReference type="SUPFAM" id="SSF49785">
    <property type="entry name" value="Galactose-binding domain-like"/>
    <property type="match status" value="2"/>
</dbReference>
<dbReference type="PROSITE" id="PS01285">
    <property type="entry name" value="FA58C_1"/>
    <property type="match status" value="2"/>
</dbReference>
<dbReference type="PROSITE" id="PS01286">
    <property type="entry name" value="FA58C_2"/>
    <property type="match status" value="1"/>
</dbReference>
<dbReference type="PROSITE" id="PS50022">
    <property type="entry name" value="FA58C_3"/>
    <property type="match status" value="2"/>
</dbReference>
<dbReference type="PROSITE" id="PS00079">
    <property type="entry name" value="MULTICOPPER_OXIDASE1"/>
    <property type="match status" value="3"/>
</dbReference>